<keyword id="KW-0058">Aromatic hydrocarbons catabolism</keyword>
<keyword id="KW-0503">Monooxygenase</keyword>
<keyword id="KW-0520">NAD</keyword>
<keyword id="KW-0560">Oxidoreductase</keyword>
<keyword id="KW-0614">Plasmid</keyword>
<name>DMPO_PSEUF</name>
<comment type="function">
    <text evidence="1 2 3">Part of a multicomponent enzyme which catalyzes the degradation of phenol and some of its methylated derivatives (PubMed:2254259). DmpL, DmpN and DmpO form the oxygenase component of the complex (PubMed:12186554). Required for growth on phenol and for in vitro phenol hydroxylase activity (PubMed:2254258, PubMed:2254259).</text>
</comment>
<comment type="catalytic activity">
    <reaction evidence="3">
        <text>phenol + NADH + O2 + H(+) = catechol + NAD(+) + H2O</text>
        <dbReference type="Rhea" id="RHEA:57952"/>
        <dbReference type="ChEBI" id="CHEBI:15377"/>
        <dbReference type="ChEBI" id="CHEBI:15378"/>
        <dbReference type="ChEBI" id="CHEBI:15379"/>
        <dbReference type="ChEBI" id="CHEBI:15882"/>
        <dbReference type="ChEBI" id="CHEBI:18135"/>
        <dbReference type="ChEBI" id="CHEBI:57540"/>
        <dbReference type="ChEBI" id="CHEBI:57945"/>
        <dbReference type="EC" id="1.14.13.244"/>
    </reaction>
    <physiologicalReaction direction="left-to-right" evidence="3">
        <dbReference type="Rhea" id="RHEA:57953"/>
    </physiologicalReaction>
</comment>
<comment type="activity regulation">
    <text evidence="1">Requires DmpM for efficient turnover. The activity of DmpLNO oxygenase is inhibited by dithiothreitol (DTT) by a mechanism apparently involving H(2)O(2) generation.</text>
</comment>
<comment type="pathway">
    <text evidence="2">Aromatic compound metabolism; phenol degradation.</text>
</comment>
<comment type="subunit">
    <text evidence="1 3">The multicomponent enzyme phenol hydroxylase is formed by DmpL (P1 component), DmpM (P2 component), DmpN (P3 component), DmpO (P4 component) and DmpP (P5 component) (PubMed:2254259). The oxygenase component is a dimer composed of three subunits, DmpL, DmpN and DmpO (DmpLNO) (PubMed:12186554).</text>
</comment>
<comment type="disruption phenotype">
    <text evidence="2">Cells lacking this gene cannot grow on phenol.</text>
</comment>
<reference key="1">
    <citation type="journal article" date="1990" name="J. Bacteriol.">
        <title>Complete nucleotide sequence and polypeptide analysis of multicomponent phenol hydroxylase from Pseudomonas sp. strain CF600.</title>
        <authorList>
            <person name="Nordlund I."/>
            <person name="Powlowski J."/>
            <person name="Shingler V."/>
        </authorList>
    </citation>
    <scope>NUCLEOTIDE SEQUENCE [GENOMIC DNA]</scope>
    <scope>FUNCTION</scope>
    <scope>PATHWAY</scope>
    <scope>DISRUPTION PHENOTYPE</scope>
    <source>
        <strain>CF600</strain>
    </source>
</reference>
<reference key="2">
    <citation type="submission" date="1994-03" db="EMBL/GenBank/DDBJ databases">
        <authorList>
            <person name="Takeo M."/>
            <person name="Maeda Y."/>
            <person name="Okada H."/>
            <person name="Miyama K."/>
            <person name="Mori K."/>
            <person name="Ike M."/>
            <person name="Fujita M."/>
        </authorList>
    </citation>
    <scope>NUCLEOTIDE SEQUENCE [GENOMIC DNA]</scope>
    <source>
        <strain>BH</strain>
    </source>
</reference>
<reference key="3">
    <citation type="journal article" date="1990" name="J. Bacteriol.">
        <title>In vitro analysis of polypeptide requirements of multicomponent phenol hydroxylase from Pseudomonas sp. strain CF600.</title>
        <authorList>
            <person name="Powlowski J."/>
            <person name="Shingler V."/>
        </authorList>
    </citation>
    <scope>FUNCTION</scope>
    <scope>CATALYTIC ACTIVITY</scope>
    <scope>SUBUNIT</scope>
    <source>
        <strain>CF600</strain>
    </source>
</reference>
<reference key="4">
    <citation type="journal article" date="2002" name="Biochemistry">
        <title>Biochemical, Moessbauer, and EPR studies of the diiron cluster of phenol hydroxylase from Pseudomonas sp. strain CF 600.</title>
        <authorList>
            <person name="Cadieux E."/>
            <person name="Vrajmasu V."/>
            <person name="Achim C."/>
            <person name="Powlowski J."/>
            <person name="Muenck E."/>
        </authorList>
    </citation>
    <scope>FUNCTION</scope>
    <scope>ACTIVITY REGULATION</scope>
    <scope>SUBUNIT</scope>
    <source>
        <strain>CF600</strain>
    </source>
</reference>
<gene>
    <name evidence="4" type="primary">dmpO</name>
    <name type="synonym">pheA5</name>
</gene>
<organism>
    <name type="scientific">Pseudomonas sp. (strain CF600)</name>
    <dbReference type="NCBI Taxonomy" id="79676"/>
    <lineage>
        <taxon>Bacteria</taxon>
        <taxon>Pseudomonadati</taxon>
        <taxon>Pseudomonadota</taxon>
    </lineage>
</organism>
<proteinExistence type="evidence at protein level"/>
<protein>
    <recommendedName>
        <fullName evidence="5">Phenol 2-monooxygenase, oxygenase component DmpO</fullName>
        <ecNumber evidence="3">1.14.13.244</ecNumber>
    </recommendedName>
    <alternativeName>
        <fullName>Phenol 2-monooxygenase P4 component</fullName>
    </alternativeName>
    <alternativeName>
        <fullName>Phenol hydroxylase P4 protein</fullName>
    </alternativeName>
</protein>
<feature type="chain" id="PRO_0000079946" description="Phenol 2-monooxygenase, oxygenase component DmpO">
    <location>
        <begin position="1"/>
        <end position="119"/>
    </location>
</feature>
<sequence>MTVNSIGEYTATPRDVQANFNGMQLLYLYWEEHLMYCSALAFLVAPGMPFAEFLEQVLKPAIHAHPDSAKIDFSQALWQLNDQPFTPDYAASLEANGIDHKSMLRLNTPGLNGIQGSCS</sequence>
<dbReference type="EC" id="1.14.13.244" evidence="3"/>
<dbReference type="EMBL" id="M60276">
    <property type="protein sequence ID" value="AAA25943.1"/>
    <property type="molecule type" value="Genomic_DNA"/>
</dbReference>
<dbReference type="EMBL" id="D28864">
    <property type="protein sequence ID" value="BAA06018.1"/>
    <property type="molecule type" value="Genomic_DNA"/>
</dbReference>
<dbReference type="SMR" id="P19733"/>
<dbReference type="BioCyc" id="MetaCyc:MONOMER-12798"/>
<dbReference type="BRENDA" id="1.14.13.244">
    <property type="organism ID" value="16277"/>
</dbReference>
<dbReference type="UniPathway" id="UPA00728"/>
<dbReference type="GO" id="GO:0018662">
    <property type="term" value="F:phenol 2-monooxygenase activity"/>
    <property type="evidence" value="ECO:0007669"/>
    <property type="project" value="UniProtKB-EC"/>
</dbReference>
<dbReference type="GO" id="GO:0019336">
    <property type="term" value="P:phenol-containing compound catabolic process"/>
    <property type="evidence" value="ECO:0007669"/>
    <property type="project" value="UniProtKB-UniPathway"/>
</dbReference>
<dbReference type="Gene3D" id="3.10.20.560">
    <property type="entry name" value="Phenol hydroxylase"/>
    <property type="match status" value="1"/>
</dbReference>
<dbReference type="InterPro" id="IPR006756">
    <property type="entry name" value="Phenol_hydroxylase"/>
</dbReference>
<dbReference type="InterPro" id="IPR043010">
    <property type="entry name" value="Phenol_hydroxylase_sf"/>
</dbReference>
<dbReference type="Pfam" id="PF04663">
    <property type="entry name" value="Phenol_monoox"/>
    <property type="match status" value="1"/>
</dbReference>
<evidence type="ECO:0000269" key="1">
    <source>
    </source>
</evidence>
<evidence type="ECO:0000269" key="2">
    <source>
    </source>
</evidence>
<evidence type="ECO:0000269" key="3">
    <source>
    </source>
</evidence>
<evidence type="ECO:0000303" key="4">
    <source>
    </source>
</evidence>
<evidence type="ECO:0000305" key="5"/>
<accession>P19733</accession>
<geneLocation type="plasmid">
    <name>pVI150</name>
</geneLocation>